<dbReference type="EC" id="7.3.2.1" evidence="1"/>
<dbReference type="EMBL" id="CP000255">
    <property type="protein sequence ID" value="ABD20904.1"/>
    <property type="molecule type" value="Genomic_DNA"/>
</dbReference>
<dbReference type="RefSeq" id="WP_000079447.1">
    <property type="nucleotide sequence ID" value="NZ_CP027476.1"/>
</dbReference>
<dbReference type="SMR" id="Q2FH51"/>
<dbReference type="KEGG" id="saa:SAUSA300_1280"/>
<dbReference type="HOGENOM" id="CLU_000604_1_22_9"/>
<dbReference type="OMA" id="TMSIYEN"/>
<dbReference type="Proteomes" id="UP000001939">
    <property type="component" value="Chromosome"/>
</dbReference>
<dbReference type="GO" id="GO:0005886">
    <property type="term" value="C:plasma membrane"/>
    <property type="evidence" value="ECO:0007669"/>
    <property type="project" value="UniProtKB-SubCell"/>
</dbReference>
<dbReference type="GO" id="GO:0005524">
    <property type="term" value="F:ATP binding"/>
    <property type="evidence" value="ECO:0007669"/>
    <property type="project" value="UniProtKB-KW"/>
</dbReference>
<dbReference type="GO" id="GO:0016887">
    <property type="term" value="F:ATP hydrolysis activity"/>
    <property type="evidence" value="ECO:0007669"/>
    <property type="project" value="InterPro"/>
</dbReference>
<dbReference type="GO" id="GO:0015415">
    <property type="term" value="F:ATPase-coupled phosphate ion transmembrane transporter activity"/>
    <property type="evidence" value="ECO:0007669"/>
    <property type="project" value="UniProtKB-EC"/>
</dbReference>
<dbReference type="GO" id="GO:0035435">
    <property type="term" value="P:phosphate ion transmembrane transport"/>
    <property type="evidence" value="ECO:0007669"/>
    <property type="project" value="InterPro"/>
</dbReference>
<dbReference type="CDD" id="cd03260">
    <property type="entry name" value="ABC_PstB_phosphate_transporter"/>
    <property type="match status" value="1"/>
</dbReference>
<dbReference type="Gene3D" id="3.40.50.300">
    <property type="entry name" value="P-loop containing nucleotide triphosphate hydrolases"/>
    <property type="match status" value="1"/>
</dbReference>
<dbReference type="InterPro" id="IPR003593">
    <property type="entry name" value="AAA+_ATPase"/>
</dbReference>
<dbReference type="InterPro" id="IPR003439">
    <property type="entry name" value="ABC_transporter-like_ATP-bd"/>
</dbReference>
<dbReference type="InterPro" id="IPR017871">
    <property type="entry name" value="ABC_transporter-like_CS"/>
</dbReference>
<dbReference type="InterPro" id="IPR027417">
    <property type="entry name" value="P-loop_NTPase"/>
</dbReference>
<dbReference type="InterPro" id="IPR005670">
    <property type="entry name" value="PstB-like"/>
</dbReference>
<dbReference type="NCBIfam" id="TIGR00972">
    <property type="entry name" value="3a0107s01c2"/>
    <property type="match status" value="1"/>
</dbReference>
<dbReference type="PANTHER" id="PTHR43423">
    <property type="entry name" value="ABC TRANSPORTER I FAMILY MEMBER 17"/>
    <property type="match status" value="1"/>
</dbReference>
<dbReference type="PANTHER" id="PTHR43423:SF1">
    <property type="entry name" value="ABC TRANSPORTER I FAMILY MEMBER 17"/>
    <property type="match status" value="1"/>
</dbReference>
<dbReference type="Pfam" id="PF00005">
    <property type="entry name" value="ABC_tran"/>
    <property type="match status" value="1"/>
</dbReference>
<dbReference type="SMART" id="SM00382">
    <property type="entry name" value="AAA"/>
    <property type="match status" value="1"/>
</dbReference>
<dbReference type="SUPFAM" id="SSF52540">
    <property type="entry name" value="P-loop containing nucleoside triphosphate hydrolases"/>
    <property type="match status" value="1"/>
</dbReference>
<dbReference type="PROSITE" id="PS00211">
    <property type="entry name" value="ABC_TRANSPORTER_1"/>
    <property type="match status" value="1"/>
</dbReference>
<dbReference type="PROSITE" id="PS50893">
    <property type="entry name" value="ABC_TRANSPORTER_2"/>
    <property type="match status" value="1"/>
</dbReference>
<dbReference type="PROSITE" id="PS51238">
    <property type="entry name" value="PSTB"/>
    <property type="match status" value="1"/>
</dbReference>
<accession>Q2FH51</accession>
<name>PSTB_STAA3</name>
<feature type="chain" id="PRO_0000272535" description="Phosphate import ATP-binding protein PstB">
    <location>
        <begin position="1"/>
        <end position="283"/>
    </location>
</feature>
<feature type="domain" description="ABC transporter" evidence="1">
    <location>
        <begin position="37"/>
        <end position="278"/>
    </location>
</feature>
<feature type="region of interest" description="Disordered" evidence="2">
    <location>
        <begin position="1"/>
        <end position="32"/>
    </location>
</feature>
<feature type="compositionally biased region" description="Polar residues" evidence="2">
    <location>
        <begin position="1"/>
        <end position="20"/>
    </location>
</feature>
<feature type="binding site" evidence="1">
    <location>
        <begin position="69"/>
        <end position="76"/>
    </location>
    <ligand>
        <name>ATP</name>
        <dbReference type="ChEBI" id="CHEBI:30616"/>
    </ligand>
</feature>
<reference key="1">
    <citation type="journal article" date="2006" name="Lancet">
        <title>Complete genome sequence of USA300, an epidemic clone of community-acquired meticillin-resistant Staphylococcus aureus.</title>
        <authorList>
            <person name="Diep B.A."/>
            <person name="Gill S.R."/>
            <person name="Chang R.F."/>
            <person name="Phan T.H."/>
            <person name="Chen J.H."/>
            <person name="Davidson M.G."/>
            <person name="Lin F."/>
            <person name="Lin J."/>
            <person name="Carleton H.A."/>
            <person name="Mongodin E.F."/>
            <person name="Sensabaugh G.F."/>
            <person name="Perdreau-Remington F."/>
        </authorList>
    </citation>
    <scope>NUCLEOTIDE SEQUENCE [LARGE SCALE GENOMIC DNA]</scope>
    <source>
        <strain>USA300</strain>
    </source>
</reference>
<sequence length="283" mass="32154">MAQTLAQTKQISQSHTFDVSQSHHKTPDDTNSHSVIYSTQNLDLWYGENHALQNINLDIYENQITAIIGPSGCGKSTYIKTLNRMVELVPSVKTAGKILYRDQDIFDQKYSKEQLRTNVGMVFQQPNPFPKSIYDNITYGPKIHGIKNKKVLDEIVEKSLRGAAIWDELKDRLHTNAYSLSGGQQQRVCIARCLAIEPEVILMDEPTSALDPISTLRVEELVQELKEKYTIIMVTHNMQQAARVSDKTAFFLNGYVNEYDDTDKIFSNPSNKKTEDYISGRFG</sequence>
<evidence type="ECO:0000255" key="1">
    <source>
        <dbReference type="HAMAP-Rule" id="MF_01702"/>
    </source>
</evidence>
<evidence type="ECO:0000256" key="2">
    <source>
        <dbReference type="SAM" id="MobiDB-lite"/>
    </source>
</evidence>
<keyword id="KW-0067">ATP-binding</keyword>
<keyword id="KW-1003">Cell membrane</keyword>
<keyword id="KW-0472">Membrane</keyword>
<keyword id="KW-0547">Nucleotide-binding</keyword>
<keyword id="KW-0592">Phosphate transport</keyword>
<keyword id="KW-1278">Translocase</keyword>
<keyword id="KW-0813">Transport</keyword>
<protein>
    <recommendedName>
        <fullName evidence="1">Phosphate import ATP-binding protein PstB</fullName>
        <ecNumber evidence="1">7.3.2.1</ecNumber>
    </recommendedName>
    <alternativeName>
        <fullName evidence="1">ABC phosphate transporter</fullName>
    </alternativeName>
    <alternativeName>
        <fullName evidence="1">Phosphate-transporting ATPase</fullName>
    </alternativeName>
</protein>
<gene>
    <name evidence="1" type="primary">pstB</name>
    <name type="ordered locus">SAUSA300_1280</name>
</gene>
<organism>
    <name type="scientific">Staphylococcus aureus (strain USA300)</name>
    <dbReference type="NCBI Taxonomy" id="367830"/>
    <lineage>
        <taxon>Bacteria</taxon>
        <taxon>Bacillati</taxon>
        <taxon>Bacillota</taxon>
        <taxon>Bacilli</taxon>
        <taxon>Bacillales</taxon>
        <taxon>Staphylococcaceae</taxon>
        <taxon>Staphylococcus</taxon>
    </lineage>
</organism>
<proteinExistence type="inferred from homology"/>
<comment type="function">
    <text evidence="1">Part of the ABC transporter complex PstSACB involved in phosphate import. Responsible for energy coupling to the transport system.</text>
</comment>
<comment type="catalytic activity">
    <reaction evidence="1">
        <text>phosphate(out) + ATP + H2O = ADP + 2 phosphate(in) + H(+)</text>
        <dbReference type="Rhea" id="RHEA:24440"/>
        <dbReference type="ChEBI" id="CHEBI:15377"/>
        <dbReference type="ChEBI" id="CHEBI:15378"/>
        <dbReference type="ChEBI" id="CHEBI:30616"/>
        <dbReference type="ChEBI" id="CHEBI:43474"/>
        <dbReference type="ChEBI" id="CHEBI:456216"/>
        <dbReference type="EC" id="7.3.2.1"/>
    </reaction>
</comment>
<comment type="subunit">
    <text evidence="1">The complex is composed of two ATP-binding proteins (PstB), two transmembrane proteins (PstC and PstA) and a solute-binding protein (PstS).</text>
</comment>
<comment type="subcellular location">
    <subcellularLocation>
        <location evidence="1">Cell membrane</location>
        <topology evidence="1">Peripheral membrane protein</topology>
    </subcellularLocation>
</comment>
<comment type="similarity">
    <text evidence="1">Belongs to the ABC transporter superfamily. Phosphate importer (TC 3.A.1.7) family.</text>
</comment>